<evidence type="ECO:0000255" key="1"/>
<evidence type="ECO:0000269" key="2">
    <source>
    </source>
</evidence>
<evidence type="ECO:0000269" key="3">
    <source>
    </source>
</evidence>
<evidence type="ECO:0000269" key="4">
    <source>
    </source>
</evidence>
<evidence type="ECO:0000303" key="5">
    <source>
    </source>
</evidence>
<evidence type="ECO:0000303" key="6">
    <source>
    </source>
</evidence>
<evidence type="ECO:0000305" key="7"/>
<evidence type="ECO:0000312" key="8">
    <source>
        <dbReference type="Araport" id="AT3G61320"/>
    </source>
</evidence>
<evidence type="ECO:0000312" key="9">
    <source>
        <dbReference type="EMBL" id="CAB71062.1"/>
    </source>
</evidence>
<reference key="1">
    <citation type="journal article" date="2000" name="Nature">
        <title>Sequence and analysis of chromosome 3 of the plant Arabidopsis thaliana.</title>
        <authorList>
            <person name="Salanoubat M."/>
            <person name="Lemcke K."/>
            <person name="Rieger M."/>
            <person name="Ansorge W."/>
            <person name="Unseld M."/>
            <person name="Fartmann B."/>
            <person name="Valle G."/>
            <person name="Bloecker H."/>
            <person name="Perez-Alonso M."/>
            <person name="Obermaier B."/>
            <person name="Delseny M."/>
            <person name="Boutry M."/>
            <person name="Grivell L.A."/>
            <person name="Mache R."/>
            <person name="Puigdomenech P."/>
            <person name="De Simone V."/>
            <person name="Choisne N."/>
            <person name="Artiguenave F."/>
            <person name="Robert C."/>
            <person name="Brottier P."/>
            <person name="Wincker P."/>
            <person name="Cattolico L."/>
            <person name="Weissenbach J."/>
            <person name="Saurin W."/>
            <person name="Quetier F."/>
            <person name="Schaefer M."/>
            <person name="Mueller-Auer S."/>
            <person name="Gabel C."/>
            <person name="Fuchs M."/>
            <person name="Benes V."/>
            <person name="Wurmbach E."/>
            <person name="Drzonek H."/>
            <person name="Erfle H."/>
            <person name="Jordan N."/>
            <person name="Bangert S."/>
            <person name="Wiedelmann R."/>
            <person name="Kranz H."/>
            <person name="Voss H."/>
            <person name="Holland R."/>
            <person name="Brandt P."/>
            <person name="Nyakatura G."/>
            <person name="Vezzi A."/>
            <person name="D'Angelo M."/>
            <person name="Pallavicini A."/>
            <person name="Toppo S."/>
            <person name="Simionati B."/>
            <person name="Conrad A."/>
            <person name="Hornischer K."/>
            <person name="Kauer G."/>
            <person name="Loehnert T.-H."/>
            <person name="Nordsiek G."/>
            <person name="Reichelt J."/>
            <person name="Scharfe M."/>
            <person name="Schoen O."/>
            <person name="Bargues M."/>
            <person name="Terol J."/>
            <person name="Climent J."/>
            <person name="Navarro P."/>
            <person name="Collado C."/>
            <person name="Perez-Perez A."/>
            <person name="Ottenwaelder B."/>
            <person name="Duchemin D."/>
            <person name="Cooke R."/>
            <person name="Laudie M."/>
            <person name="Berger-Llauro C."/>
            <person name="Purnelle B."/>
            <person name="Masuy D."/>
            <person name="de Haan M."/>
            <person name="Maarse A.C."/>
            <person name="Alcaraz J.-P."/>
            <person name="Cottet A."/>
            <person name="Casacuberta E."/>
            <person name="Monfort A."/>
            <person name="Argiriou A."/>
            <person name="Flores M."/>
            <person name="Liguori R."/>
            <person name="Vitale D."/>
            <person name="Mannhaupt G."/>
            <person name="Haase D."/>
            <person name="Schoof H."/>
            <person name="Rudd S."/>
            <person name="Zaccaria P."/>
            <person name="Mewes H.-W."/>
            <person name="Mayer K.F.X."/>
            <person name="Kaul S."/>
            <person name="Town C.D."/>
            <person name="Koo H.L."/>
            <person name="Tallon L.J."/>
            <person name="Jenkins J."/>
            <person name="Rooney T."/>
            <person name="Rizzo M."/>
            <person name="Walts A."/>
            <person name="Utterback T."/>
            <person name="Fujii C.Y."/>
            <person name="Shea T.P."/>
            <person name="Creasy T.H."/>
            <person name="Haas B."/>
            <person name="Maiti R."/>
            <person name="Wu D."/>
            <person name="Peterson J."/>
            <person name="Van Aken S."/>
            <person name="Pai G."/>
            <person name="Militscher J."/>
            <person name="Sellers P."/>
            <person name="Gill J.E."/>
            <person name="Feldblyum T.V."/>
            <person name="Preuss D."/>
            <person name="Lin X."/>
            <person name="Nierman W.C."/>
            <person name="Salzberg S.L."/>
            <person name="White O."/>
            <person name="Venter J.C."/>
            <person name="Fraser C.M."/>
            <person name="Kaneko T."/>
            <person name="Nakamura Y."/>
            <person name="Sato S."/>
            <person name="Kato T."/>
            <person name="Asamizu E."/>
            <person name="Sasamoto S."/>
            <person name="Kimura T."/>
            <person name="Idesawa K."/>
            <person name="Kawashima K."/>
            <person name="Kishida Y."/>
            <person name="Kiyokawa C."/>
            <person name="Kohara M."/>
            <person name="Matsumoto M."/>
            <person name="Matsuno A."/>
            <person name="Muraki A."/>
            <person name="Nakayama S."/>
            <person name="Nakazaki N."/>
            <person name="Shinpo S."/>
            <person name="Takeuchi C."/>
            <person name="Wada T."/>
            <person name="Watanabe A."/>
            <person name="Yamada M."/>
            <person name="Yasuda M."/>
            <person name="Tabata S."/>
        </authorList>
    </citation>
    <scope>NUCLEOTIDE SEQUENCE [LARGE SCALE GENOMIC DNA]</scope>
    <source>
        <strain>cv. Columbia</strain>
    </source>
</reference>
<reference key="2">
    <citation type="journal article" date="2017" name="Plant J.">
        <title>Araport11: a complete reannotation of the Arabidopsis thaliana reference genome.</title>
        <authorList>
            <person name="Cheng C.Y."/>
            <person name="Krishnakumar V."/>
            <person name="Chan A.P."/>
            <person name="Thibaud-Nissen F."/>
            <person name="Schobel S."/>
            <person name="Town C.D."/>
        </authorList>
    </citation>
    <scope>GENOME REANNOTATION</scope>
    <source>
        <strain>cv. Columbia</strain>
    </source>
</reference>
<reference key="3">
    <citation type="journal article" date="2003" name="Science">
        <title>Empirical analysis of transcriptional activity in the Arabidopsis genome.</title>
        <authorList>
            <person name="Yamada K."/>
            <person name="Lim J."/>
            <person name="Dale J.M."/>
            <person name="Chen H."/>
            <person name="Shinn P."/>
            <person name="Palm C.J."/>
            <person name="Southwick A.M."/>
            <person name="Wu H.C."/>
            <person name="Kim C.J."/>
            <person name="Nguyen M."/>
            <person name="Pham P.K."/>
            <person name="Cheuk R.F."/>
            <person name="Karlin-Newmann G."/>
            <person name="Liu S.X."/>
            <person name="Lam B."/>
            <person name="Sakano H."/>
            <person name="Wu T."/>
            <person name="Yu G."/>
            <person name="Miranda M."/>
            <person name="Quach H.L."/>
            <person name="Tripp M."/>
            <person name="Chang C.H."/>
            <person name="Lee J.M."/>
            <person name="Toriumi M.J."/>
            <person name="Chan M.M."/>
            <person name="Tang C.C."/>
            <person name="Onodera C.S."/>
            <person name="Deng J.M."/>
            <person name="Akiyama K."/>
            <person name="Ansari Y."/>
            <person name="Arakawa T."/>
            <person name="Banh J."/>
            <person name="Banno F."/>
            <person name="Bowser L."/>
            <person name="Brooks S.Y."/>
            <person name="Carninci P."/>
            <person name="Chao Q."/>
            <person name="Choy N."/>
            <person name="Enju A."/>
            <person name="Goldsmith A.D."/>
            <person name="Gurjal M."/>
            <person name="Hansen N.F."/>
            <person name="Hayashizaki Y."/>
            <person name="Johnson-Hopson C."/>
            <person name="Hsuan V.W."/>
            <person name="Iida K."/>
            <person name="Karnes M."/>
            <person name="Khan S."/>
            <person name="Koesema E."/>
            <person name="Ishida J."/>
            <person name="Jiang P.X."/>
            <person name="Jones T."/>
            <person name="Kawai J."/>
            <person name="Kamiya A."/>
            <person name="Meyers C."/>
            <person name="Nakajima M."/>
            <person name="Narusaka M."/>
            <person name="Seki M."/>
            <person name="Sakurai T."/>
            <person name="Satou M."/>
            <person name="Tamse R."/>
            <person name="Vaysberg M."/>
            <person name="Wallender E.K."/>
            <person name="Wong C."/>
            <person name="Yamamura Y."/>
            <person name="Yuan S."/>
            <person name="Shinozaki K."/>
            <person name="Davis R.W."/>
            <person name="Theologis A."/>
            <person name="Ecker J.R."/>
        </authorList>
    </citation>
    <scope>NUCLEOTIDE SEQUENCE [LARGE SCALE MRNA]</scope>
    <source>
        <strain>cv. Columbia</strain>
    </source>
</reference>
<reference key="4">
    <citation type="journal article" date="2016" name="J. Integr. Plant Biol.">
        <title>A bestrophin-like protein modulates the proton motive force across the thylakoid membrane in Arabidopsis.</title>
        <authorList>
            <person name="Duan Z."/>
            <person name="Kong F."/>
            <person name="Zhang L."/>
            <person name="Li W."/>
            <person name="Zhang J."/>
            <person name="Peng L."/>
        </authorList>
    </citation>
    <scope>FUNCTION</scope>
    <scope>DISRUPTION PHENOTYPE</scope>
    <scope>TRANSPORTER ACTIVITY</scope>
    <scope>TISSUE SPECIFICITY</scope>
    <scope>SUBCELLULAR LOCATION</scope>
    <scope>TOPOLOGY</scope>
    <source>
        <strain>cv. Columbia</strain>
    </source>
</reference>
<reference key="5">
    <citation type="journal article" date="2016" name="Nat. Commun.">
        <title>A voltage-dependent chloride channel fine-tunes photosynthesis in plants.</title>
        <authorList>
            <person name="Herdean A."/>
            <person name="Teardo E."/>
            <person name="Nilsson A.K."/>
            <person name="Pfeil B.E."/>
            <person name="Johansson O.N."/>
            <person name="Uennep R."/>
            <person name="Nagy G."/>
            <person name="Zsiros O."/>
            <person name="Dana S."/>
            <person name="Solymosi K."/>
            <person name="Garab G."/>
            <person name="Szabo I."/>
            <person name="Spetea C."/>
            <person name="Lundin B."/>
        </authorList>
    </citation>
    <scope>FUNCTION</scope>
    <scope>DISRUPTION PHENOTYPE</scope>
    <scope>TRANSPORTER ACTIVITY</scope>
    <scope>SUBCELLULAR LOCATION</scope>
    <scope>TISSUE SPECIFICITY</scope>
    <scope>ACTIVITY REGULATION</scope>
    <source>
        <strain>cv. Columbia</strain>
    </source>
</reference>
<reference key="6">
    <citation type="journal article" date="2019" name="Sci. Rep.">
        <title>K+ and Cl- channels/transporters independently fine-tune photosynthesis in plants.</title>
        <authorList>
            <person name="Dukic E."/>
            <person name="Herdean A."/>
            <person name="Cheregi O."/>
            <person name="Sharma A."/>
            <person name="Nziengui H."/>
            <person name="Dmitruk D."/>
            <person name="Solymosi K."/>
            <person name="Pribil M."/>
            <person name="Spetea C."/>
        </authorList>
    </citation>
    <scope>FUNCTION</scope>
    <scope>DISRUPTION PHENOTYPE</scope>
    <source>
        <strain>cv. Columbia</strain>
    </source>
</reference>
<sequence length="410" mass="46539">MYQSMNLSVSSNFTHRSLLESRFPIFSTGFRKSVNLKPPRVSSGPESNDSGHETLTDKLIHLLRAVPDWADEIKERGMQQKRSLYTHEKWVEHRSSLRHVRHLLSSFSSRVILSLIPPVFFFTSVAVVIASYNSAVALDWLPGIFPILRSSSLPYQLTAPALALLLVFRTEASYSRYEEGRKAWVGIIAGTNDLARQVICSVDSSGDELIIKDLLLRYIAAFPVALKCHVIYGSDIARDLRNLIEADDLSLILQAKHRPRCVIEFISQSIQLLKLDDAKRDLLESKMLHLHEGIGVCEQLMGIPIPLSYTRLTSRFLVFWHLTLPIILWDECHWIVVPATFISAASLFCIEEVGVLIEEPFPMLALDELCDLVHSNIQEAVKSEKVIRNRIIAKIKLHEFKHSSNGRHRS</sequence>
<organism>
    <name type="scientific">Arabidopsis thaliana</name>
    <name type="common">Mouse-ear cress</name>
    <dbReference type="NCBI Taxonomy" id="3702"/>
    <lineage>
        <taxon>Eukaryota</taxon>
        <taxon>Viridiplantae</taxon>
        <taxon>Streptophyta</taxon>
        <taxon>Embryophyta</taxon>
        <taxon>Tracheophyta</taxon>
        <taxon>Spermatophyta</taxon>
        <taxon>Magnoliopsida</taxon>
        <taxon>eudicotyledons</taxon>
        <taxon>Gunneridae</taxon>
        <taxon>Pentapetalae</taxon>
        <taxon>rosids</taxon>
        <taxon>malvids</taxon>
        <taxon>Brassicales</taxon>
        <taxon>Brassicaceae</taxon>
        <taxon>Camelineae</taxon>
        <taxon>Arabidopsis</taxon>
    </lineage>
</organism>
<name>VCCN1_ARATH</name>
<keyword id="KW-0868">Chloride</keyword>
<keyword id="KW-0869">Chloride channel</keyword>
<keyword id="KW-0150">Chloroplast</keyword>
<keyword id="KW-0407">Ion channel</keyword>
<keyword id="KW-0406">Ion transport</keyword>
<keyword id="KW-0472">Membrane</keyword>
<keyword id="KW-0934">Plastid</keyword>
<keyword id="KW-1185">Reference proteome</keyword>
<keyword id="KW-0793">Thylakoid</keyword>
<keyword id="KW-0809">Transit peptide</keyword>
<keyword id="KW-0812">Transmembrane</keyword>
<keyword id="KW-1133">Transmembrane helix</keyword>
<keyword id="KW-0813">Transport</keyword>
<gene>
    <name evidence="6" type="primary">VCCN1</name>
    <name evidence="5" type="synonym">BEST1</name>
    <name evidence="8" type="ordered locus">At3g61320</name>
    <name evidence="9" type="ORF">T20K12.220</name>
</gene>
<dbReference type="EMBL" id="AL137898">
    <property type="protein sequence ID" value="CAB71062.1"/>
    <property type="status" value="ALT_INIT"/>
    <property type="molecule type" value="Genomic_DNA"/>
</dbReference>
<dbReference type="EMBL" id="CP002686">
    <property type="protein sequence ID" value="AEE80187.1"/>
    <property type="molecule type" value="Genomic_DNA"/>
</dbReference>
<dbReference type="EMBL" id="AY058894">
    <property type="protein sequence ID" value="AAL24280.1"/>
    <property type="molecule type" value="mRNA"/>
</dbReference>
<dbReference type="EMBL" id="AY143083">
    <property type="protein sequence ID" value="AAN12915.1"/>
    <property type="molecule type" value="mRNA"/>
</dbReference>
<dbReference type="PIR" id="T47924">
    <property type="entry name" value="T47924"/>
</dbReference>
<dbReference type="RefSeq" id="NP_191691.2">
    <property type="nucleotide sequence ID" value="NM_115996.4"/>
</dbReference>
<dbReference type="SMR" id="Q9M2D2"/>
<dbReference type="BioGRID" id="10618">
    <property type="interactions" value="3"/>
</dbReference>
<dbReference type="FunCoup" id="Q9M2D2">
    <property type="interactions" value="126"/>
</dbReference>
<dbReference type="IntAct" id="Q9M2D2">
    <property type="interactions" value="3"/>
</dbReference>
<dbReference type="STRING" id="3702.Q9M2D2"/>
<dbReference type="TCDB" id="1.A.46.2.7">
    <property type="family name" value="the anion channel-forming bestrophin (bestrophin) family"/>
</dbReference>
<dbReference type="PaxDb" id="3702-AT3G61320.1"/>
<dbReference type="ProteomicsDB" id="232316"/>
<dbReference type="EnsemblPlants" id="AT3G61320.1">
    <property type="protein sequence ID" value="AT3G61320.1"/>
    <property type="gene ID" value="AT3G61320"/>
</dbReference>
<dbReference type="GeneID" id="825304"/>
<dbReference type="Gramene" id="AT3G61320.1">
    <property type="protein sequence ID" value="AT3G61320.1"/>
    <property type="gene ID" value="AT3G61320"/>
</dbReference>
<dbReference type="KEGG" id="ath:AT3G61320"/>
<dbReference type="Araport" id="AT3G61320"/>
<dbReference type="TAIR" id="AT3G61320">
    <property type="gene designation" value="BEST"/>
</dbReference>
<dbReference type="eggNOG" id="ENOG502QSQE">
    <property type="taxonomic scope" value="Eukaryota"/>
</dbReference>
<dbReference type="HOGENOM" id="CLU_029790_7_0_1"/>
<dbReference type="InParanoid" id="Q9M2D2"/>
<dbReference type="OMA" id="AYSVMIH"/>
<dbReference type="OrthoDB" id="1368at2759"/>
<dbReference type="PhylomeDB" id="Q9M2D2"/>
<dbReference type="PRO" id="PR:Q9M2D2"/>
<dbReference type="Proteomes" id="UP000006548">
    <property type="component" value="Chromosome 3"/>
</dbReference>
<dbReference type="ExpressionAtlas" id="Q9M2D2">
    <property type="expression patterns" value="baseline and differential"/>
</dbReference>
<dbReference type="GO" id="GO:0034707">
    <property type="term" value="C:chloride channel complex"/>
    <property type="evidence" value="ECO:0007669"/>
    <property type="project" value="UniProtKB-KW"/>
</dbReference>
<dbReference type="GO" id="GO:0009507">
    <property type="term" value="C:chloroplast"/>
    <property type="evidence" value="ECO:0000314"/>
    <property type="project" value="TAIR"/>
</dbReference>
<dbReference type="GO" id="GO:0009533">
    <property type="term" value="C:chloroplast stromal thylakoid"/>
    <property type="evidence" value="ECO:0000314"/>
    <property type="project" value="TAIR"/>
</dbReference>
<dbReference type="GO" id="GO:0009535">
    <property type="term" value="C:chloroplast thylakoid membrane"/>
    <property type="evidence" value="ECO:0007669"/>
    <property type="project" value="UniProtKB-SubCell"/>
</dbReference>
<dbReference type="GO" id="GO:0042651">
    <property type="term" value="C:thylakoid membrane"/>
    <property type="evidence" value="ECO:0000314"/>
    <property type="project" value="TAIR"/>
</dbReference>
<dbReference type="GO" id="GO:0005247">
    <property type="term" value="F:voltage-gated chloride channel activity"/>
    <property type="evidence" value="ECO:0000314"/>
    <property type="project" value="TAIR"/>
</dbReference>
<dbReference type="GO" id="GO:0019684">
    <property type="term" value="P:photosynthesis, light reaction"/>
    <property type="evidence" value="ECO:0000315"/>
    <property type="project" value="TAIR"/>
</dbReference>
<dbReference type="GO" id="GO:0042548">
    <property type="term" value="P:regulation of photosynthesis, light reaction"/>
    <property type="evidence" value="ECO:0000314"/>
    <property type="project" value="TAIR"/>
</dbReference>
<dbReference type="GO" id="GO:0010027">
    <property type="term" value="P:thylakoid membrane organization"/>
    <property type="evidence" value="ECO:0000315"/>
    <property type="project" value="TAIR"/>
</dbReference>
<dbReference type="InterPro" id="IPR021134">
    <property type="entry name" value="Bestrophin-like"/>
</dbReference>
<dbReference type="InterPro" id="IPR024701">
    <property type="entry name" value="VCCN1/2"/>
</dbReference>
<dbReference type="InterPro" id="IPR044669">
    <property type="entry name" value="YneE/VCCN1/2-like"/>
</dbReference>
<dbReference type="PANTHER" id="PTHR33281">
    <property type="entry name" value="UPF0187 PROTEIN YNEE"/>
    <property type="match status" value="1"/>
</dbReference>
<dbReference type="PANTHER" id="PTHR33281:SF1">
    <property type="entry name" value="VOLTAGE-DEPENDENT CHLORIDE CHANNEL 1, CHLOROPLASTIC"/>
    <property type="match status" value="1"/>
</dbReference>
<dbReference type="Pfam" id="PF01062">
    <property type="entry name" value="Bestrophin"/>
    <property type="match status" value="1"/>
</dbReference>
<dbReference type="PIRSF" id="PIRSF016988">
    <property type="entry name" value="UCP016988"/>
    <property type="match status" value="1"/>
</dbReference>
<proteinExistence type="evidence at protein level"/>
<protein>
    <recommendedName>
        <fullName evidence="6">Voltage-dependent chloride channel 1, chloroplastic</fullName>
        <shortName evidence="6">AtVCCN1</shortName>
    </recommendedName>
    <alternativeName>
        <fullName evidence="5">BESTROPHIN-like protein 1</fullName>
        <shortName evidence="5">AtBest1</shortName>
    </alternativeName>
</protein>
<comment type="function">
    <text evidence="2 3 4">Voltage-dependent chloride (Cl) channel critical for proton motive force (PMF) partitioning across the thylakoid membrane by anion influx into the lumen during illumination, thus being required for photoprotection under fluctuating light conditions (PubMed:26947269, PubMed:27216227). Influences thylakoid ultrastructure, including lumen size and organization (PubMed:26947269). During photosynthetic response on transition from dark to low light, involved in a sequential mechanism of adaptation; VCCN1 and CLCe first trigger the activation of photoprotection, which is later down-regulated by KEA3 to a low steady state, while adjusting electron transport (PubMed:31201341). On transition from low to high light, accelerates the activation of photoprotection by building up a pH gradient across the thylakoid membrane (PubMed:31201341).</text>
</comment>
<comment type="catalytic activity">
    <reaction evidence="2 3">
        <text>chloride(in) = chloride(out)</text>
        <dbReference type="Rhea" id="RHEA:29823"/>
        <dbReference type="ChEBI" id="CHEBI:17996"/>
    </reaction>
</comment>
<comment type="activity regulation">
    <text evidence="3">More active at positive than at negative voltages (PubMed:27216227). Repressed by the general anion channel inhibitors dithiocyanatostilbene-2,20-disulphonic acid (DIDS) and niflumic acid (PubMed:27216227).</text>
</comment>
<comment type="subcellular location">
    <subcellularLocation>
        <location evidence="2 3">Plastid</location>
        <location evidence="2 3">Chloroplast thylakoid membrane</location>
        <topology evidence="1">Multi-pass membrane protein</topology>
    </subcellularLocation>
</comment>
<comment type="tissue specificity">
    <text evidence="2 3">Mostly expressed in flowers and leaves and, to a lower extent, in stems and roots.</text>
</comment>
<comment type="disruption phenotype">
    <text evidence="2 3 4">No visible phenotype except stronger photoinhibition when grown in the field (PubMed:26947269, PubMed:31201341). Slightly reduced proton gradient (delta-pH) but increased electric potential (delta-Psi) across the thylakoid membrane leading to moderately elevated proton motive force (PMF) (PubMed:26947269, PubMed:27216227). Transiently decreased non-photochemical quenching (NPQ) during the dark-to-light transition (PubMed:26947269, PubMed:27216227, PubMed:31201341). Slower NPQ induction on transition from low to high light (PubMed:31201341). Wider thylakoid lumen thickness, loosely stacked grana and disorganized stroma thylakoid system (PubMed:26947269). The atbest1-1 atbest2-1 double mutant has a reduced non-photochemical quenching (NPQ) during the dark-to-light transition similarly to the atbest1-1 single mutant (PubMed:26947269). Lower photosynthetic performance in dark-adapted clce vccn1 double mutant, as well as in the clce kea3 vccn1 triple mutant (PubMed:31201341). Altered NPQ upon transition from dark to low light in clce vccn1 and kea3 vccn1 double mutants and in the clce kea3 vccn1 triple mutant (PubMed:31201341).</text>
</comment>
<comment type="similarity">
    <text evidence="7">Belongs to the anion channel-forming bestrophin (TC 1.A.46) family. Voltage-dependent chloride channel subfamily.</text>
</comment>
<comment type="sequence caution" evidence="7">
    <conflict type="erroneous initiation">
        <sequence resource="EMBL-CDS" id="CAB71062"/>
    </conflict>
    <text>Truncated N-terminus.</text>
</comment>
<feature type="transit peptide" description="Chloroplast" evidence="1">
    <location>
        <begin position="1"/>
        <end status="unknown"/>
    </location>
</feature>
<feature type="chain" id="PRO_0000036237" description="Voltage-dependent chloride channel 1, chloroplastic">
    <location>
        <begin status="unknown"/>
        <end position="410"/>
    </location>
</feature>
<feature type="topological domain" description="Lumenal, thylakoid" evidence="7">
    <location>
        <begin position="1"/>
        <end position="110"/>
    </location>
</feature>
<feature type="transmembrane region" description="Helical; Name=1" evidence="1">
    <location>
        <begin position="111"/>
        <end position="131"/>
    </location>
</feature>
<feature type="topological domain" description="Stromal" evidence="7">
    <location>
        <begin position="132"/>
        <end position="147"/>
    </location>
</feature>
<feature type="transmembrane region" description="Helical; Name=2" evidence="1">
    <location>
        <begin position="148"/>
        <end position="168"/>
    </location>
</feature>
<feature type="topological domain" description="Lumenal, thylakoid" evidence="7">
    <location>
        <begin position="169"/>
        <end position="315"/>
    </location>
</feature>
<feature type="transmembrane region" description="Helical; Name=3" evidence="1">
    <location>
        <begin position="316"/>
        <end position="336"/>
    </location>
</feature>
<feature type="transmembrane region" description="Helical; Name=4" evidence="1">
    <location>
        <begin position="337"/>
        <end position="357"/>
    </location>
</feature>
<feature type="topological domain" description="Lumenal, thylakoid" evidence="7">
    <location>
        <begin position="358"/>
        <end position="410"/>
    </location>
</feature>
<accession>Q9M2D2</accession>
<accession>Q93YZ0</accession>